<comment type="function">
    <text evidence="1">Required for rescue of stalled ribosomes mediated by trans-translation. Binds to transfer-messenger RNA (tmRNA), required for stable association of tmRNA with ribosomes. tmRNA and SmpB together mimic tRNA shape, replacing the anticodon stem-loop with SmpB. tmRNA is encoded by the ssrA gene; the 2 termini fold to resemble tRNA(Ala) and it encodes a 'tag peptide', a short internal open reading frame. During trans-translation Ala-aminoacylated tmRNA acts like a tRNA, entering the A-site of stalled ribosomes, displacing the stalled mRNA. The ribosome then switches to translate the ORF on the tmRNA; the nascent peptide is terminated with the 'tag peptide' encoded by the tmRNA and targeted for degradation. The ribosome is freed to recommence translation, which seems to be the essential function of trans-translation.</text>
</comment>
<comment type="subcellular location">
    <subcellularLocation>
        <location evidence="1">Cytoplasm</location>
    </subcellularLocation>
    <text evidence="1">The tmRNA-SmpB complex associates with stalled 70S ribosomes.</text>
</comment>
<comment type="similarity">
    <text evidence="1">Belongs to the SmpB family.</text>
</comment>
<protein>
    <recommendedName>
        <fullName evidence="1">SsrA-binding protein</fullName>
    </recommendedName>
    <alternativeName>
        <fullName evidence="1">Small protein B</fullName>
    </alternativeName>
</protein>
<feature type="chain" id="PRO_1000002160" description="SsrA-binding protein">
    <location>
        <begin position="1"/>
        <end position="154"/>
    </location>
</feature>
<sequence length="154" mass="17837">MPKKKSPGTLAENRKARHDYNIEDTIEAGIVLQGTEIKSIRRGSANLKDSYAQVNRGEMFLNNMHIAPYEEGNRFNHDPRRSRKLLLHKREIAKLGERTREVGYSIVPLKLYLKHGHCKVLLGVARGKKKYDKRQALKEKAVQRDVAREMKARY</sequence>
<evidence type="ECO:0000255" key="1">
    <source>
        <dbReference type="HAMAP-Rule" id="MF_00023"/>
    </source>
</evidence>
<name>SSRP_STAS1</name>
<organism>
    <name type="scientific">Staphylococcus saprophyticus subsp. saprophyticus (strain ATCC 15305 / DSM 20229 / NCIMB 8711 / NCTC 7292 / S-41)</name>
    <dbReference type="NCBI Taxonomy" id="342451"/>
    <lineage>
        <taxon>Bacteria</taxon>
        <taxon>Bacillati</taxon>
        <taxon>Bacillota</taxon>
        <taxon>Bacilli</taxon>
        <taxon>Bacillales</taxon>
        <taxon>Staphylococcaceae</taxon>
        <taxon>Staphylococcus</taxon>
    </lineage>
</organism>
<reference key="1">
    <citation type="journal article" date="2005" name="Proc. Natl. Acad. Sci. U.S.A.">
        <title>Whole genome sequence of Staphylococcus saprophyticus reveals the pathogenesis of uncomplicated urinary tract infection.</title>
        <authorList>
            <person name="Kuroda M."/>
            <person name="Yamashita A."/>
            <person name="Hirakawa H."/>
            <person name="Kumano M."/>
            <person name="Morikawa K."/>
            <person name="Higashide M."/>
            <person name="Maruyama A."/>
            <person name="Inose Y."/>
            <person name="Matoba K."/>
            <person name="Toh H."/>
            <person name="Kuhara S."/>
            <person name="Hattori M."/>
            <person name="Ohta T."/>
        </authorList>
    </citation>
    <scope>NUCLEOTIDE SEQUENCE [LARGE SCALE GENOMIC DNA]</scope>
    <source>
        <strain>ATCC 15305 / DSM 20229 / NCIMB 8711 / NCTC 7292 / S-41</strain>
    </source>
</reference>
<accession>Q49W09</accession>
<keyword id="KW-0963">Cytoplasm</keyword>
<keyword id="KW-1185">Reference proteome</keyword>
<keyword id="KW-0694">RNA-binding</keyword>
<gene>
    <name evidence="1" type="primary">smpB</name>
    <name type="ordered locus">SSP1906</name>
</gene>
<proteinExistence type="inferred from homology"/>
<dbReference type="EMBL" id="AP008934">
    <property type="protein sequence ID" value="BAE19051.1"/>
    <property type="molecule type" value="Genomic_DNA"/>
</dbReference>
<dbReference type="RefSeq" id="WP_011303579.1">
    <property type="nucleotide sequence ID" value="NZ_MTGA01000039.1"/>
</dbReference>
<dbReference type="SMR" id="Q49W09"/>
<dbReference type="GeneID" id="3615065"/>
<dbReference type="KEGG" id="ssp:SSP1906"/>
<dbReference type="eggNOG" id="COG0691">
    <property type="taxonomic scope" value="Bacteria"/>
</dbReference>
<dbReference type="HOGENOM" id="CLU_108953_0_1_9"/>
<dbReference type="OrthoDB" id="9805462at2"/>
<dbReference type="Proteomes" id="UP000006371">
    <property type="component" value="Chromosome"/>
</dbReference>
<dbReference type="GO" id="GO:0005829">
    <property type="term" value="C:cytosol"/>
    <property type="evidence" value="ECO:0007669"/>
    <property type="project" value="TreeGrafter"/>
</dbReference>
<dbReference type="GO" id="GO:0003723">
    <property type="term" value="F:RNA binding"/>
    <property type="evidence" value="ECO:0007669"/>
    <property type="project" value="UniProtKB-UniRule"/>
</dbReference>
<dbReference type="GO" id="GO:0070929">
    <property type="term" value="P:trans-translation"/>
    <property type="evidence" value="ECO:0007669"/>
    <property type="project" value="UniProtKB-UniRule"/>
</dbReference>
<dbReference type="CDD" id="cd09294">
    <property type="entry name" value="SmpB"/>
    <property type="match status" value="1"/>
</dbReference>
<dbReference type="Gene3D" id="2.40.280.10">
    <property type="match status" value="1"/>
</dbReference>
<dbReference type="HAMAP" id="MF_00023">
    <property type="entry name" value="SmpB"/>
    <property type="match status" value="1"/>
</dbReference>
<dbReference type="InterPro" id="IPR023620">
    <property type="entry name" value="SmpB"/>
</dbReference>
<dbReference type="InterPro" id="IPR000037">
    <property type="entry name" value="SsrA-bd_prot"/>
</dbReference>
<dbReference type="InterPro" id="IPR020081">
    <property type="entry name" value="SsrA-bd_prot_CS"/>
</dbReference>
<dbReference type="NCBIfam" id="NF003843">
    <property type="entry name" value="PRK05422.1"/>
    <property type="match status" value="1"/>
</dbReference>
<dbReference type="NCBIfam" id="TIGR00086">
    <property type="entry name" value="smpB"/>
    <property type="match status" value="1"/>
</dbReference>
<dbReference type="PANTHER" id="PTHR30308:SF2">
    <property type="entry name" value="SSRA-BINDING PROTEIN"/>
    <property type="match status" value="1"/>
</dbReference>
<dbReference type="PANTHER" id="PTHR30308">
    <property type="entry name" value="TMRNA-BINDING COMPONENT OF TRANS-TRANSLATION TAGGING COMPLEX"/>
    <property type="match status" value="1"/>
</dbReference>
<dbReference type="Pfam" id="PF01668">
    <property type="entry name" value="SmpB"/>
    <property type="match status" value="1"/>
</dbReference>
<dbReference type="SUPFAM" id="SSF74982">
    <property type="entry name" value="Small protein B (SmpB)"/>
    <property type="match status" value="1"/>
</dbReference>
<dbReference type="PROSITE" id="PS01317">
    <property type="entry name" value="SSRP"/>
    <property type="match status" value="1"/>
</dbReference>